<keyword id="KW-0066">ATP synthesis</keyword>
<keyword id="KW-0997">Cell inner membrane</keyword>
<keyword id="KW-1003">Cell membrane</keyword>
<keyword id="KW-0139">CF(1)</keyword>
<keyword id="KW-0375">Hydrogen ion transport</keyword>
<keyword id="KW-0406">Ion transport</keyword>
<keyword id="KW-0472">Membrane</keyword>
<keyword id="KW-0813">Transport</keyword>
<organism>
    <name type="scientific">Xanthomonas oryzae pv. oryzae (strain MAFF 311018)</name>
    <dbReference type="NCBI Taxonomy" id="342109"/>
    <lineage>
        <taxon>Bacteria</taxon>
        <taxon>Pseudomonadati</taxon>
        <taxon>Pseudomonadota</taxon>
        <taxon>Gammaproteobacteria</taxon>
        <taxon>Lysobacterales</taxon>
        <taxon>Lysobacteraceae</taxon>
        <taxon>Xanthomonas</taxon>
    </lineage>
</organism>
<name>ATPG_XANOM</name>
<sequence length="287" mass="31913">MAGGREIKTKIKSVQNTRKVTRALEMVSASKIRKAQERMKTSRPYAQAMKQVIGHLAQASTDFQHPFLIEREQVKRVGYIVISSDRGLAGGLNNNLFRKMLGEVRPWQGTGAEIDVVTIGQKASAFFRRIKVNMVGSVTHLGDSPQVEQLIGVIKVMIDAFIEGKVDRVYLVYNRFVNTMTQKASFDQLLPLPAAEHKVAHHDWDYLYEPDAASVLEHVMTRYIESLVYQAVLENVASEHAARMVAMKAASDNANKMIGTLQLVYNKARQAAITQEISEIVSGAAAV</sequence>
<feature type="chain" id="PRO_1000053376" description="ATP synthase gamma chain">
    <location>
        <begin position="1"/>
        <end position="287"/>
    </location>
</feature>
<comment type="function">
    <text evidence="1">Produces ATP from ADP in the presence of a proton gradient across the membrane. The gamma chain is believed to be important in regulating ATPase activity and the flow of protons through the CF(0) complex.</text>
</comment>
<comment type="subunit">
    <text evidence="1">F-type ATPases have 2 components, CF(1) - the catalytic core - and CF(0) - the membrane proton channel. CF(1) has five subunits: alpha(3), beta(3), gamma(1), delta(1), epsilon(1). CF(0) has three main subunits: a, b and c.</text>
</comment>
<comment type="subcellular location">
    <subcellularLocation>
        <location evidence="1">Cell inner membrane</location>
        <topology evidence="1">Peripheral membrane protein</topology>
    </subcellularLocation>
</comment>
<comment type="similarity">
    <text evidence="1">Belongs to the ATPase gamma chain family.</text>
</comment>
<protein>
    <recommendedName>
        <fullName evidence="1">ATP synthase gamma chain</fullName>
    </recommendedName>
    <alternativeName>
        <fullName evidence="1">ATP synthase F1 sector gamma subunit</fullName>
    </alternativeName>
    <alternativeName>
        <fullName evidence="1">F-ATPase gamma subunit</fullName>
    </alternativeName>
</protein>
<accession>Q2P7Q5</accession>
<proteinExistence type="inferred from homology"/>
<gene>
    <name evidence="1" type="primary">atpG</name>
    <name type="ordered locus">XOO0667</name>
</gene>
<reference key="1">
    <citation type="journal article" date="2005" name="Jpn. Agric. Res. Q.">
        <title>Genome sequence of Xanthomonas oryzae pv. oryzae suggests contribution of large numbers of effector genes and insertion sequences to its race diversity.</title>
        <authorList>
            <person name="Ochiai H."/>
            <person name="Inoue Y."/>
            <person name="Takeya M."/>
            <person name="Sasaki A."/>
            <person name="Kaku H."/>
        </authorList>
    </citation>
    <scope>NUCLEOTIDE SEQUENCE [LARGE SCALE GENOMIC DNA]</scope>
    <source>
        <strain>MAFF 311018</strain>
    </source>
</reference>
<dbReference type="EMBL" id="AP008229">
    <property type="protein sequence ID" value="BAE67422.1"/>
    <property type="molecule type" value="Genomic_DNA"/>
</dbReference>
<dbReference type="RefSeq" id="WP_011257624.1">
    <property type="nucleotide sequence ID" value="NC_007705.1"/>
</dbReference>
<dbReference type="SMR" id="Q2P7Q5"/>
<dbReference type="KEGG" id="xom:XOO0667"/>
<dbReference type="HOGENOM" id="CLU_050669_0_1_6"/>
<dbReference type="GO" id="GO:0005886">
    <property type="term" value="C:plasma membrane"/>
    <property type="evidence" value="ECO:0007669"/>
    <property type="project" value="UniProtKB-SubCell"/>
</dbReference>
<dbReference type="GO" id="GO:0045259">
    <property type="term" value="C:proton-transporting ATP synthase complex"/>
    <property type="evidence" value="ECO:0007669"/>
    <property type="project" value="UniProtKB-KW"/>
</dbReference>
<dbReference type="GO" id="GO:0005524">
    <property type="term" value="F:ATP binding"/>
    <property type="evidence" value="ECO:0007669"/>
    <property type="project" value="UniProtKB-UniRule"/>
</dbReference>
<dbReference type="GO" id="GO:0046933">
    <property type="term" value="F:proton-transporting ATP synthase activity, rotational mechanism"/>
    <property type="evidence" value="ECO:0007669"/>
    <property type="project" value="UniProtKB-UniRule"/>
</dbReference>
<dbReference type="GO" id="GO:0042777">
    <property type="term" value="P:proton motive force-driven plasma membrane ATP synthesis"/>
    <property type="evidence" value="ECO:0007669"/>
    <property type="project" value="UniProtKB-UniRule"/>
</dbReference>
<dbReference type="CDD" id="cd12151">
    <property type="entry name" value="F1-ATPase_gamma"/>
    <property type="match status" value="1"/>
</dbReference>
<dbReference type="FunFam" id="1.10.287.80:FF:000005">
    <property type="entry name" value="ATP synthase gamma chain"/>
    <property type="match status" value="1"/>
</dbReference>
<dbReference type="FunFam" id="3.40.1380.10:FF:000007">
    <property type="entry name" value="ATP synthase gamma chain"/>
    <property type="match status" value="1"/>
</dbReference>
<dbReference type="Gene3D" id="3.40.1380.10">
    <property type="match status" value="1"/>
</dbReference>
<dbReference type="Gene3D" id="1.10.287.80">
    <property type="entry name" value="ATP synthase, gamma subunit, helix hairpin domain"/>
    <property type="match status" value="1"/>
</dbReference>
<dbReference type="HAMAP" id="MF_00815">
    <property type="entry name" value="ATP_synth_gamma_bact"/>
    <property type="match status" value="1"/>
</dbReference>
<dbReference type="InterPro" id="IPR035968">
    <property type="entry name" value="ATP_synth_F1_ATPase_gsu"/>
</dbReference>
<dbReference type="InterPro" id="IPR000131">
    <property type="entry name" value="ATP_synth_F1_gsu"/>
</dbReference>
<dbReference type="InterPro" id="IPR023632">
    <property type="entry name" value="ATP_synth_F1_gsu_CS"/>
</dbReference>
<dbReference type="NCBIfam" id="TIGR01146">
    <property type="entry name" value="ATPsyn_F1gamma"/>
    <property type="match status" value="1"/>
</dbReference>
<dbReference type="NCBIfam" id="NF004144">
    <property type="entry name" value="PRK05621.1-1"/>
    <property type="match status" value="1"/>
</dbReference>
<dbReference type="PANTHER" id="PTHR11693">
    <property type="entry name" value="ATP SYNTHASE GAMMA CHAIN"/>
    <property type="match status" value="1"/>
</dbReference>
<dbReference type="PANTHER" id="PTHR11693:SF22">
    <property type="entry name" value="ATP SYNTHASE SUBUNIT GAMMA, MITOCHONDRIAL"/>
    <property type="match status" value="1"/>
</dbReference>
<dbReference type="Pfam" id="PF00231">
    <property type="entry name" value="ATP-synt"/>
    <property type="match status" value="1"/>
</dbReference>
<dbReference type="PRINTS" id="PR00126">
    <property type="entry name" value="ATPASEGAMMA"/>
</dbReference>
<dbReference type="SUPFAM" id="SSF52943">
    <property type="entry name" value="ATP synthase (F1-ATPase), gamma subunit"/>
    <property type="match status" value="1"/>
</dbReference>
<dbReference type="PROSITE" id="PS00153">
    <property type="entry name" value="ATPASE_GAMMA"/>
    <property type="match status" value="1"/>
</dbReference>
<evidence type="ECO:0000255" key="1">
    <source>
        <dbReference type="HAMAP-Rule" id="MF_00815"/>
    </source>
</evidence>